<protein>
    <recommendedName>
        <fullName>Uncharacterized 11.8 kDa protein in hlv 5'region</fullName>
    </recommendedName>
    <alternativeName>
        <fullName>ORF2</fullName>
    </alternativeName>
</protein>
<feature type="signal peptide" evidence="1">
    <location>
        <begin position="1"/>
        <end position="23"/>
    </location>
</feature>
<feature type="chain" id="PRO_0000022708" description="Uncharacterized 11.8 kDa protein in hlv 5'region">
    <location>
        <begin position="24"/>
        <end position="104"/>
    </location>
</feature>
<organism>
    <name type="scientific">Lactobacillus helveticus</name>
    <name type="common">Lactobacillus suntoryeus</name>
    <dbReference type="NCBI Taxonomy" id="1587"/>
    <lineage>
        <taxon>Bacteria</taxon>
        <taxon>Bacillati</taxon>
        <taxon>Bacillota</taxon>
        <taxon>Bacilli</taxon>
        <taxon>Lactobacillales</taxon>
        <taxon>Lactobacillaceae</taxon>
        <taxon>Lactobacillus</taxon>
    </lineage>
</organism>
<keyword id="KW-0732">Signal</keyword>
<dbReference type="EMBL" id="M59360">
    <property type="protein sequence ID" value="AAA63273.1"/>
    <property type="molecule type" value="Genomic_DNA"/>
</dbReference>
<dbReference type="PIR" id="B37145">
    <property type="entry name" value="B37145"/>
</dbReference>
<dbReference type="SMR" id="P22295"/>
<proteinExistence type="inferred from homology"/>
<name>YHV2_LACHE</name>
<reference key="1">
    <citation type="journal article" date="1990" name="J. Bacteriol.">
        <title>Cloning, expression, and nucleotide sequence of the Lactobacillus helveticus 481 gene encoding the bacteriocin helveticin J.</title>
        <authorList>
            <person name="Joerger M.C."/>
            <person name="Klaenhammer T.R."/>
        </authorList>
    </citation>
    <scope>NUCLEOTIDE SEQUENCE [GENOMIC DNA]</scope>
    <source>
        <strain>481</strain>
    </source>
</reference>
<accession>P22295</accession>
<sequence length="104" mass="11809">MDIHDYVELIALAFWVISVVSVGILSHVHFKNKRLEQFRITADDLMKNYVGLYNKESLASDQKINRIVNAVVDGLEAKGFKVEDQDVKDIFAKVAKIINENSSK</sequence>
<evidence type="ECO:0000255" key="1"/>